<reference key="1">
    <citation type="journal article" date="1985" name="Gene">
        <title>Nucleotide sequence of the major early region of Bacillus subtilis phage PZA, a close relative of phi 29.</title>
        <authorList>
            <person name="Paces V."/>
            <person name="Vlcek C."/>
            <person name="Urbanek P."/>
            <person name="Hostomsky Z."/>
        </authorList>
    </citation>
    <scope>NUCLEOTIDE SEQUENCE [GENOMIC DNA]</scope>
</reference>
<organism>
    <name type="scientific">Bacillus phage PZA</name>
    <name type="common">Bacteriophage PZA</name>
    <dbReference type="NCBI Taxonomy" id="10757"/>
    <lineage>
        <taxon>Viruses</taxon>
        <taxon>Duplodnaviria</taxon>
        <taxon>Heunggongvirae</taxon>
        <taxon>Uroviricota</taxon>
        <taxon>Caudoviricetes</taxon>
        <taxon>Salasmaviridae</taxon>
        <taxon>Picovirinae</taxon>
        <taxon>Salasvirus</taxon>
        <taxon>Salasvirus PZA</taxon>
    </lineage>
</organism>
<accession>P06947</accession>
<organismHost>
    <name type="scientific">Bacillus subtilis</name>
    <dbReference type="NCBI Taxonomy" id="1423"/>
</organismHost>
<proteinExistence type="predicted"/>
<protein>
    <recommendedName>
        <fullName>Early protein GP1A</fullName>
    </recommendedName>
</protein>
<gene>
    <name type="primary">1A</name>
</gene>
<dbReference type="EMBL" id="M11813">
    <property type="protein sequence ID" value="AAA88481.1"/>
    <property type="molecule type" value="Genomic_DNA"/>
</dbReference>
<dbReference type="PIR" id="A24528">
    <property type="entry name" value="ERBP1A"/>
</dbReference>
<dbReference type="Proteomes" id="UP000000855">
    <property type="component" value="Segment"/>
</dbReference>
<name>VG1A_BPPZA</name>
<sequence length="59" mass="6865">MSYLVTIFSINAIGVVRRYDTTARSRTDAASVLIKYKAPRGYKFDRFELSRERSIFDVL</sequence>
<feature type="chain" id="PRO_0000106549" description="Early protein GP1A">
    <location>
        <begin position="1"/>
        <end position="59"/>
    </location>
</feature>
<keyword id="KW-0244">Early protein</keyword>